<gene>
    <name type="primary">PRM1</name>
</gene>
<sequence length="63" mass="8716">MARYRRHSRSRSRSRYRRRRRRRSRHRNRRRTYRRSRRHSRRRRGRRRGYSRRRYSRRGRRRY</sequence>
<evidence type="ECO:0000250" key="1"/>
<evidence type="ECO:0000256" key="2">
    <source>
        <dbReference type="SAM" id="MobiDB-lite"/>
    </source>
</evidence>
<evidence type="ECO:0000305" key="3"/>
<name>HSP1_DASBY</name>
<protein>
    <recommendedName>
        <fullName>Sperm protamine P1</fullName>
    </recommendedName>
</protein>
<proteinExistence type="evidence at transcript level"/>
<feature type="chain" id="PRO_0000191460" description="Sperm protamine P1">
    <location>
        <begin position="1"/>
        <end position="63"/>
    </location>
</feature>
<feature type="region of interest" description="Disordered" evidence="2">
    <location>
        <begin position="1"/>
        <end position="63"/>
    </location>
</feature>
<accession>Q71VG7</accession>
<comment type="function">
    <text evidence="1">Protamines substitute for histones in the chromatin of sperm during the haploid phase of spermatogenesis. They compact sperm DNA into a highly condensed, stable and inactive complex (By similarity).</text>
</comment>
<comment type="subcellular location">
    <subcellularLocation>
        <location evidence="1">Nucleus</location>
    </subcellularLocation>
    <subcellularLocation>
        <location evidence="1">Chromosome</location>
    </subcellularLocation>
</comment>
<comment type="tissue specificity">
    <text>Testis.</text>
</comment>
<comment type="similarity">
    <text evidence="3">Belongs to the protamine P1 family.</text>
</comment>
<reference key="1">
    <citation type="journal article" date="1997" name="J. Mammal. Evol.">
        <title>Reconstructing the taxonomic radiation of dasyurine marsupials with cytochrome b, 12S rRNA, and protamine P1 gene trees.</title>
        <authorList>
            <person name="Krajewski C."/>
            <person name="Young J."/>
            <person name="Buckley L."/>
            <person name="Woolley P.A."/>
            <person name="Westerman M."/>
        </authorList>
    </citation>
    <scope>NUCLEOTIDE SEQUENCE [GENOMIC DNA]</scope>
</reference>
<organism>
    <name type="scientific">Dasyuroides byrnei</name>
    <name type="common">Kowari</name>
    <name type="synonym">Dasycercus byrnei</name>
    <dbReference type="NCBI Taxonomy" id="32544"/>
    <lineage>
        <taxon>Eukaryota</taxon>
        <taxon>Metazoa</taxon>
        <taxon>Chordata</taxon>
        <taxon>Craniata</taxon>
        <taxon>Vertebrata</taxon>
        <taxon>Euteleostomi</taxon>
        <taxon>Mammalia</taxon>
        <taxon>Metatheria</taxon>
        <taxon>Dasyuromorphia</taxon>
        <taxon>Dasyuridae</taxon>
        <taxon>Dasyuroides</taxon>
    </lineage>
</organism>
<keyword id="KW-0158">Chromosome</keyword>
<keyword id="KW-0217">Developmental protein</keyword>
<keyword id="KW-0221">Differentiation</keyword>
<keyword id="KW-0226">DNA condensation</keyword>
<keyword id="KW-0238">DNA-binding</keyword>
<keyword id="KW-0544">Nucleosome core</keyword>
<keyword id="KW-0539">Nucleus</keyword>
<keyword id="KW-0744">Spermatogenesis</keyword>
<dbReference type="EMBL" id="AF010271">
    <property type="protein sequence ID" value="AAB69301.1"/>
    <property type="molecule type" value="Genomic_DNA"/>
</dbReference>
<dbReference type="GO" id="GO:0000786">
    <property type="term" value="C:nucleosome"/>
    <property type="evidence" value="ECO:0007669"/>
    <property type="project" value="UniProtKB-KW"/>
</dbReference>
<dbReference type="GO" id="GO:0005634">
    <property type="term" value="C:nucleus"/>
    <property type="evidence" value="ECO:0007669"/>
    <property type="project" value="UniProtKB-SubCell"/>
</dbReference>
<dbReference type="GO" id="GO:0003677">
    <property type="term" value="F:DNA binding"/>
    <property type="evidence" value="ECO:0007669"/>
    <property type="project" value="UniProtKB-KW"/>
</dbReference>
<dbReference type="GO" id="GO:0030261">
    <property type="term" value="P:chromosome condensation"/>
    <property type="evidence" value="ECO:0007669"/>
    <property type="project" value="UniProtKB-KW"/>
</dbReference>
<dbReference type="GO" id="GO:0035092">
    <property type="term" value="P:sperm DNA condensation"/>
    <property type="evidence" value="ECO:0007669"/>
    <property type="project" value="InterPro"/>
</dbReference>
<dbReference type="InterPro" id="IPR000221">
    <property type="entry name" value="Protamine_P1"/>
</dbReference>
<dbReference type="PROSITE" id="PS00048">
    <property type="entry name" value="PROTAMINE_P1"/>
    <property type="match status" value="1"/>
</dbReference>